<reference key="1">
    <citation type="journal article" date="2008" name="Nature">
        <title>The genome of the choanoflagellate Monosiga brevicollis and the origin of metazoans.</title>
        <authorList>
            <consortium name="JGI Sequencing"/>
            <person name="King N."/>
            <person name="Westbrook M.J."/>
            <person name="Young S.L."/>
            <person name="Kuo A."/>
            <person name="Abedin M."/>
            <person name="Chapman J."/>
            <person name="Fairclough S."/>
            <person name="Hellsten U."/>
            <person name="Isogai Y."/>
            <person name="Letunic I."/>
            <person name="Marr M."/>
            <person name="Pincus D."/>
            <person name="Putnam N."/>
            <person name="Rokas A."/>
            <person name="Wright K.J."/>
            <person name="Zuzow R."/>
            <person name="Dirks W."/>
            <person name="Good M."/>
            <person name="Goodstein D."/>
            <person name="Lemons D."/>
            <person name="Li W."/>
            <person name="Lyons J.B."/>
            <person name="Morris A."/>
            <person name="Nichols S."/>
            <person name="Richter D.J."/>
            <person name="Salamov A."/>
            <person name="Bork P."/>
            <person name="Lim W.A."/>
            <person name="Manning G."/>
            <person name="Miller W.T."/>
            <person name="McGinnis W."/>
            <person name="Shapiro H."/>
            <person name="Tjian R."/>
            <person name="Grigoriev I.V."/>
            <person name="Rokhsar D."/>
        </authorList>
    </citation>
    <scope>NUCLEOTIDE SEQUENCE [LARGE SCALE GENOMIC DNA]</scope>
    <source>
        <strain>MX1 / ATCC 50154</strain>
    </source>
</reference>
<feature type="chain" id="PRO_0000391873" description="DDRGK domain-containing protein 1">
    <location>
        <begin position="1"/>
        <end position="293"/>
    </location>
</feature>
<feature type="topological domain" description="Lumenal" evidence="4">
    <location>
        <begin position="1"/>
        <end position="6"/>
    </location>
</feature>
<feature type="transmembrane region" description="Helical" evidence="2">
    <location>
        <begin position="7"/>
        <end position="27"/>
    </location>
</feature>
<feature type="topological domain" description="Cytoplasmic" evidence="4">
    <location>
        <begin position="28"/>
        <end position="293"/>
    </location>
</feature>
<feature type="region of interest" description="Disordered" evidence="3">
    <location>
        <begin position="30"/>
        <end position="151"/>
    </location>
</feature>
<feature type="region of interest" description="Disordered" evidence="3">
    <location>
        <begin position="273"/>
        <end position="293"/>
    </location>
</feature>
<feature type="compositionally biased region" description="Basic and acidic residues" evidence="3">
    <location>
        <begin position="90"/>
        <end position="126"/>
    </location>
</feature>
<feature type="compositionally biased region" description="Basic and acidic residues" evidence="3">
    <location>
        <begin position="133"/>
        <end position="151"/>
    </location>
</feature>
<organism>
    <name type="scientific">Monosiga brevicollis</name>
    <name type="common">Choanoflagellate</name>
    <dbReference type="NCBI Taxonomy" id="81824"/>
    <lineage>
        <taxon>Eukaryota</taxon>
        <taxon>Choanoflagellata</taxon>
        <taxon>Craspedida</taxon>
        <taxon>Salpingoecidae</taxon>
        <taxon>Monosiga</taxon>
    </lineage>
</organism>
<keyword id="KW-0256">Endoplasmic reticulum</keyword>
<keyword id="KW-0472">Membrane</keyword>
<keyword id="KW-1185">Reference proteome</keyword>
<keyword id="KW-0812">Transmembrane</keyword>
<keyword id="KW-1133">Transmembrane helix</keyword>
<keyword id="KW-0833">Ubl conjugation pathway</keyword>
<accession>A9UQM0</accession>
<comment type="function">
    <text evidence="1">Substrate adapter for ufmylation, the covalent attachment of the ubiquitin-like modifier UFM1 to substrate proteins.</text>
</comment>
<comment type="subcellular location">
    <subcellularLocation>
        <location evidence="1">Endoplasmic reticulum membrane</location>
        <topology evidence="1">Single-pass membrane protein</topology>
    </subcellularLocation>
</comment>
<comment type="similarity">
    <text evidence="4">Belongs to the DDRGK1 family.</text>
</comment>
<evidence type="ECO:0000250" key="1">
    <source>
        <dbReference type="UniProtKB" id="Q96HY6"/>
    </source>
</evidence>
<evidence type="ECO:0000255" key="2"/>
<evidence type="ECO:0000256" key="3">
    <source>
        <dbReference type="SAM" id="MobiDB-lite"/>
    </source>
</evidence>
<evidence type="ECO:0000305" key="4"/>
<name>DDRGK_MONBE</name>
<sequence>MWGPLIYALLGLAIVAAAFLFVRRSQAKEVVPVADDDDKENGAAADEVNPRQAGDQGHTDDEDGEEGNEGLKNFMYDENGKKLGVKKARKLQEKEERRRRNEEMAQAREQAKLLQHQEEEERKEREAEEAEDERQREAELEREREAQRQKELEEYNSLKSMFVVEESGELDVDHEAQAQSLLNEFVSFIKEKKVVQLEDLAAHFGLKTQDTIERIQQLEAEGRLTGLTDDRGKYIFISEEELSEVVKFIERRGRITIAELMDNSNRLISLSETDVEFPGDEPAPADVDETTTA</sequence>
<protein>
    <recommendedName>
        <fullName>DDRGK domain-containing protein 1</fullName>
    </recommendedName>
</protein>
<gene>
    <name type="ORF">22450</name>
</gene>
<proteinExistence type="inferred from homology"/>
<dbReference type="EMBL" id="CH991543">
    <property type="protein sequence ID" value="EDQ93068.1"/>
    <property type="molecule type" value="Genomic_DNA"/>
</dbReference>
<dbReference type="RefSeq" id="XP_001742830.1">
    <property type="nucleotide sequence ID" value="XM_001742778.1"/>
</dbReference>
<dbReference type="SMR" id="A9UQM0"/>
<dbReference type="FunCoup" id="A9UQM0">
    <property type="interactions" value="466"/>
</dbReference>
<dbReference type="STRING" id="81824.A9UQM0"/>
<dbReference type="EnsemblProtists" id="EDQ93068">
    <property type="protein sequence ID" value="EDQ93068"/>
    <property type="gene ID" value="MONBRDRAFT_22450"/>
</dbReference>
<dbReference type="KEGG" id="mbr:MONBRDRAFT_22450"/>
<dbReference type="eggNOG" id="KOG3054">
    <property type="taxonomic scope" value="Eukaryota"/>
</dbReference>
<dbReference type="InParanoid" id="A9UQM0"/>
<dbReference type="OMA" id="VEHGNKV"/>
<dbReference type="Proteomes" id="UP000001357">
    <property type="component" value="Unassembled WGS sequence"/>
</dbReference>
<dbReference type="GO" id="GO:0005789">
    <property type="term" value="C:endoplasmic reticulum membrane"/>
    <property type="evidence" value="ECO:0007669"/>
    <property type="project" value="UniProtKB-SubCell"/>
</dbReference>
<dbReference type="GO" id="GO:0044389">
    <property type="term" value="F:ubiquitin-like protein ligase binding"/>
    <property type="evidence" value="ECO:0000318"/>
    <property type="project" value="GO_Central"/>
</dbReference>
<dbReference type="FunFam" id="1.10.10.10:FF:000143">
    <property type="entry name" value="DDRGK domain-containing protein 1"/>
    <property type="match status" value="1"/>
</dbReference>
<dbReference type="Gene3D" id="1.10.10.10">
    <property type="entry name" value="Winged helix-like DNA-binding domain superfamily/Winged helix DNA-binding domain"/>
    <property type="match status" value="1"/>
</dbReference>
<dbReference type="InterPro" id="IPR019153">
    <property type="entry name" value="DDRGK_dom-contain"/>
</dbReference>
<dbReference type="InterPro" id="IPR050899">
    <property type="entry name" value="DDRGK_domain-containing"/>
</dbReference>
<dbReference type="InterPro" id="IPR036388">
    <property type="entry name" value="WH-like_DNA-bd_sf"/>
</dbReference>
<dbReference type="InterPro" id="IPR036390">
    <property type="entry name" value="WH_DNA-bd_sf"/>
</dbReference>
<dbReference type="PANTHER" id="PTHR48176">
    <property type="entry name" value="DDRGK DOMAIN-CONTAINING PROTEIN 1"/>
    <property type="match status" value="1"/>
</dbReference>
<dbReference type="PANTHER" id="PTHR48176:SF1">
    <property type="entry name" value="DDRGK DOMAIN-CONTAINING PROTEIN 1"/>
    <property type="match status" value="1"/>
</dbReference>
<dbReference type="Pfam" id="PF09756">
    <property type="entry name" value="DDRGK"/>
    <property type="match status" value="1"/>
</dbReference>
<dbReference type="SMART" id="SM01128">
    <property type="entry name" value="DDRGK"/>
    <property type="match status" value="1"/>
</dbReference>
<dbReference type="SUPFAM" id="SSF46785">
    <property type="entry name" value="Winged helix' DNA-binding domain"/>
    <property type="match status" value="1"/>
</dbReference>